<comment type="function">
    <text evidence="1">The heterodimer acts as both an ATP-dependent DNA helicase and an ATP-dependent, dual-direction single-stranded exonuclease. Recognizes the chi site generating a DNA molecule suitable for the initiation of homologous recombination. The AddB subunit has 5' -&gt; 3' nuclease activity but not helicase activity.</text>
</comment>
<comment type="cofactor">
    <cofactor evidence="1">
        <name>Mg(2+)</name>
        <dbReference type="ChEBI" id="CHEBI:18420"/>
    </cofactor>
</comment>
<comment type="cofactor">
    <cofactor evidence="1">
        <name>[4Fe-4S] cluster</name>
        <dbReference type="ChEBI" id="CHEBI:49883"/>
    </cofactor>
    <text evidence="1">Binds 1 [4Fe-4S] cluster.</text>
</comment>
<comment type="subunit">
    <text evidence="1">Heterodimer of AddA and AddB.</text>
</comment>
<comment type="miscellaneous">
    <text evidence="1">Despite having conserved helicase domains, this subunit does not have helicase activity.</text>
</comment>
<comment type="similarity">
    <text evidence="1">Belongs to the helicase family. AddB/RexB type 1 subfamily.</text>
</comment>
<name>ADDB_BACMK</name>
<reference key="1">
    <citation type="journal article" date="2008" name="Chem. Biol. Interact.">
        <title>Extending the Bacillus cereus group genomics to putative food-borne pathogens of different toxicity.</title>
        <authorList>
            <person name="Lapidus A."/>
            <person name="Goltsman E."/>
            <person name="Auger S."/>
            <person name="Galleron N."/>
            <person name="Segurens B."/>
            <person name="Dossat C."/>
            <person name="Land M.L."/>
            <person name="Broussolle V."/>
            <person name="Brillard J."/>
            <person name="Guinebretiere M.-H."/>
            <person name="Sanchis V."/>
            <person name="Nguen-the C."/>
            <person name="Lereclus D."/>
            <person name="Richardson P."/>
            <person name="Wincker P."/>
            <person name="Weissenbach J."/>
            <person name="Ehrlich S.D."/>
            <person name="Sorokin A."/>
        </authorList>
    </citation>
    <scope>NUCLEOTIDE SEQUENCE [LARGE SCALE GENOMIC DNA]</scope>
    <source>
        <strain>KBAB4</strain>
    </source>
</reference>
<dbReference type="EC" id="3.1.-.-" evidence="1"/>
<dbReference type="EMBL" id="CP000903">
    <property type="protein sequence ID" value="ABY42290.1"/>
    <property type="molecule type" value="Genomic_DNA"/>
</dbReference>
<dbReference type="RefSeq" id="WP_012260537.1">
    <property type="nucleotide sequence ID" value="NC_010184.1"/>
</dbReference>
<dbReference type="SMR" id="A9VJ01"/>
<dbReference type="KEGG" id="bwe:BcerKBAB4_1040"/>
<dbReference type="eggNOG" id="COG3857">
    <property type="taxonomic scope" value="Bacteria"/>
</dbReference>
<dbReference type="HOGENOM" id="CLU_007838_0_0_9"/>
<dbReference type="Proteomes" id="UP000002154">
    <property type="component" value="Chromosome"/>
</dbReference>
<dbReference type="GO" id="GO:0051539">
    <property type="term" value="F:4 iron, 4 sulfur cluster binding"/>
    <property type="evidence" value="ECO:0007669"/>
    <property type="project" value="UniProtKB-KW"/>
</dbReference>
<dbReference type="GO" id="GO:0008409">
    <property type="term" value="F:5'-3' exonuclease activity"/>
    <property type="evidence" value="ECO:0007669"/>
    <property type="project" value="UniProtKB-UniRule"/>
</dbReference>
<dbReference type="GO" id="GO:0005524">
    <property type="term" value="F:ATP binding"/>
    <property type="evidence" value="ECO:0007669"/>
    <property type="project" value="UniProtKB-UniRule"/>
</dbReference>
<dbReference type="GO" id="GO:0003690">
    <property type="term" value="F:double-stranded DNA binding"/>
    <property type="evidence" value="ECO:0007669"/>
    <property type="project" value="UniProtKB-UniRule"/>
</dbReference>
<dbReference type="GO" id="GO:0004386">
    <property type="term" value="F:helicase activity"/>
    <property type="evidence" value="ECO:0007669"/>
    <property type="project" value="UniProtKB-KW"/>
</dbReference>
<dbReference type="GO" id="GO:0046872">
    <property type="term" value="F:metal ion binding"/>
    <property type="evidence" value="ECO:0007669"/>
    <property type="project" value="UniProtKB-KW"/>
</dbReference>
<dbReference type="GO" id="GO:0000724">
    <property type="term" value="P:double-strand break repair via homologous recombination"/>
    <property type="evidence" value="ECO:0007669"/>
    <property type="project" value="UniProtKB-UniRule"/>
</dbReference>
<dbReference type="FunFam" id="3.40.50.300:FF:001679">
    <property type="entry name" value="ATP-dependent helicase/deoxyribonuclease subunit B"/>
    <property type="match status" value="1"/>
</dbReference>
<dbReference type="FunFam" id="3.40.50.300:FF:001739">
    <property type="entry name" value="ATP-dependent helicase/deoxyribonuclease subunit B"/>
    <property type="match status" value="1"/>
</dbReference>
<dbReference type="FunFam" id="3.90.320.10:FF:000006">
    <property type="entry name" value="ATP-dependent helicase/deoxyribonuclease subunit B"/>
    <property type="match status" value="1"/>
</dbReference>
<dbReference type="Gene3D" id="3.90.320.10">
    <property type="match status" value="1"/>
</dbReference>
<dbReference type="Gene3D" id="6.10.140.1030">
    <property type="match status" value="1"/>
</dbReference>
<dbReference type="Gene3D" id="3.40.50.300">
    <property type="entry name" value="P-loop containing nucleotide triphosphate hydrolases"/>
    <property type="match status" value="4"/>
</dbReference>
<dbReference type="HAMAP" id="MF_01452">
    <property type="entry name" value="AddB_type1"/>
    <property type="match status" value="1"/>
</dbReference>
<dbReference type="InterPro" id="IPR049035">
    <property type="entry name" value="ADDB_N"/>
</dbReference>
<dbReference type="InterPro" id="IPR014140">
    <property type="entry name" value="DNA_helicase_suAddB"/>
</dbReference>
<dbReference type="InterPro" id="IPR014017">
    <property type="entry name" value="DNA_helicase_UvrD-like_C"/>
</dbReference>
<dbReference type="InterPro" id="IPR027417">
    <property type="entry name" value="P-loop_NTPase"/>
</dbReference>
<dbReference type="InterPro" id="IPR011604">
    <property type="entry name" value="PDDEXK-like_dom_sf"/>
</dbReference>
<dbReference type="InterPro" id="IPR038726">
    <property type="entry name" value="PDDEXK_AddAB-type"/>
</dbReference>
<dbReference type="NCBIfam" id="TIGR02773">
    <property type="entry name" value="addB_Gpos"/>
    <property type="match status" value="1"/>
</dbReference>
<dbReference type="PANTHER" id="PTHR30591">
    <property type="entry name" value="RECBCD ENZYME SUBUNIT RECC"/>
    <property type="match status" value="1"/>
</dbReference>
<dbReference type="PANTHER" id="PTHR30591:SF1">
    <property type="entry name" value="RECBCD ENZYME SUBUNIT RECC"/>
    <property type="match status" value="1"/>
</dbReference>
<dbReference type="Pfam" id="PF21445">
    <property type="entry name" value="ADDB_N"/>
    <property type="match status" value="1"/>
</dbReference>
<dbReference type="Pfam" id="PF12705">
    <property type="entry name" value="PDDEXK_1"/>
    <property type="match status" value="1"/>
</dbReference>
<dbReference type="Pfam" id="PF13361">
    <property type="entry name" value="UvrD_C"/>
    <property type="match status" value="1"/>
</dbReference>
<dbReference type="SUPFAM" id="SSF52540">
    <property type="entry name" value="P-loop containing nucleoside triphosphate hydrolases"/>
    <property type="match status" value="2"/>
</dbReference>
<dbReference type="PROSITE" id="PS51198">
    <property type="entry name" value="UVRD_HELICASE_ATP_BIND"/>
    <property type="match status" value="1"/>
</dbReference>
<dbReference type="PROSITE" id="PS51217">
    <property type="entry name" value="UVRD_HELICASE_CTER"/>
    <property type="match status" value="1"/>
</dbReference>
<keyword id="KW-0004">4Fe-4S</keyword>
<keyword id="KW-0067">ATP-binding</keyword>
<keyword id="KW-0227">DNA damage</keyword>
<keyword id="KW-0234">DNA repair</keyword>
<keyword id="KW-0238">DNA-binding</keyword>
<keyword id="KW-0269">Exonuclease</keyword>
<keyword id="KW-0347">Helicase</keyword>
<keyword id="KW-0378">Hydrolase</keyword>
<keyword id="KW-0408">Iron</keyword>
<keyword id="KW-0411">Iron-sulfur</keyword>
<keyword id="KW-0479">Metal-binding</keyword>
<keyword id="KW-0540">Nuclease</keyword>
<keyword id="KW-0547">Nucleotide-binding</keyword>
<feature type="chain" id="PRO_0000379166" description="ATP-dependent helicase/deoxyribonuclease subunit B">
    <location>
        <begin position="1"/>
        <end position="1171"/>
    </location>
</feature>
<feature type="domain" description="UvrD-like helicase ATP-binding" evidence="1">
    <location>
        <begin position="1"/>
        <end position="301"/>
    </location>
</feature>
<feature type="domain" description="UvrD-like helicase C-terminal" evidence="1">
    <location>
        <begin position="281"/>
        <end position="587"/>
    </location>
</feature>
<feature type="binding site" evidence="1">
    <location>
        <begin position="8"/>
        <end position="15"/>
    </location>
    <ligand>
        <name>ATP</name>
        <dbReference type="ChEBI" id="CHEBI:30616"/>
    </ligand>
</feature>
<feature type="binding site" evidence="1">
    <location>
        <position position="805"/>
    </location>
    <ligand>
        <name>[4Fe-4S] cluster</name>
        <dbReference type="ChEBI" id="CHEBI:49883"/>
    </ligand>
</feature>
<feature type="binding site" evidence="1">
    <location>
        <position position="1129"/>
    </location>
    <ligand>
        <name>[4Fe-4S] cluster</name>
        <dbReference type="ChEBI" id="CHEBI:49883"/>
    </ligand>
</feature>
<feature type="binding site" evidence="1">
    <location>
        <position position="1132"/>
    </location>
    <ligand>
        <name>[4Fe-4S] cluster</name>
        <dbReference type="ChEBI" id="CHEBI:49883"/>
    </ligand>
</feature>
<feature type="binding site" evidence="1">
    <location>
        <position position="1138"/>
    </location>
    <ligand>
        <name>[4Fe-4S] cluster</name>
        <dbReference type="ChEBI" id="CHEBI:49883"/>
    </ligand>
</feature>
<sequence length="1171" mass="134314">MSLRFVIGRAGSGKSTLCLHEVQEELKQRPRGKTILYLVPEQMTFQTQQALIGSEDVRGSIRAQVFSFSRLAWKVLQEVGGASRLHIDEAGVHMLLRKIVESRKDGLSVFQKAAEQNGFFEHLGSMIAEFKRYNVTPSNVYEMWQQLDTHSSSAEQKLLANKVYDLQLLYDDFERALIGKYLDSEDYLQLLIEKLSDSEYVKGAEIYIDGFHSFSPQELEIVRGLMRLGTRVTITLTIDEKTLAQPVNELDLFYETTLTYERIKQVAREEKIEVEKTIPLMKQPRFHSQALAHLEMHYEARPNEKFHGEASVTISTAANLRAEVEGVAREIRRLVATEDYRYRDIAVLLRNGESYYDVMRTLFTDYNIPHFIDEKRPMSHHPLVECIRSALEIISGNWRYDAVFRCVKTELLYPLDVRKEAMREEMDEFENYCLAYGVQGKRWTSEDPWMYRRYRSLDDASEMITDSEREMEEKINRLRDVVRTPVIRMQKRLKRAGTVMQMCEAVYLFLEELDVPKKLEALRIRAEESGDFLFATDHEQVWEEVMSLLDTFVEMLGEEKMSLSMFTDVMTTGLEALQFANIPPSLDQVLVANIDHSRLSDIKATFIIGVNEGVIPAAPMDEGMLSDEERNVLTAAGIELAPTTRQTLLEEQFVMYQMVTRASEKLYISCPLADEEGKTLLASSFIKKIKRMFPDVKESFITNDVNDLSRSEQLSYVATPEVTLSYVMQQLQTWKRYGFEGNLDFWWDVYNFYVTSDEWKQKSSRVLSSLFYRNRAQKLSTDVSRDLYGDTIKGSVSRMELFNRCAYAHFAQHGLSLRERDIFKLDAPDIGELFHAALKRIADKLLRENRTWADLSIKECEHLSALVIEEIAPLLQRQILLSSNRHFYLKQKLQQIIFRTSLILREHAKSSGFVPVDLEVPFGMGGTGSLPPMEFALPNGVKMEVVGRIDRVDKAEDESGTFLRIIDYKSSSKALDLTEVYYGLALQMLTYLDVVTSNAHTWMKKGSTASPAGVLYFHIHNPIVEMKGDASEEEIEKEILKKFKMKGLVLGDADVVRLMDNKLSTGSSDIISAGLKKDGSFSARSSIASEQEFNVLQKYVHHSFENIGKDITEGVIDIAPYKKGNKAACTFCNFKSVCQFDESLEDNQFRTLKDMKDSEAMEKIREEVGGE</sequence>
<gene>
    <name evidence="1" type="primary">addB</name>
    <name type="ordered locus">BcerKBAB4_1040</name>
</gene>
<organism>
    <name type="scientific">Bacillus mycoides (strain KBAB4)</name>
    <name type="common">Bacillus weihenstephanensis</name>
    <dbReference type="NCBI Taxonomy" id="315730"/>
    <lineage>
        <taxon>Bacteria</taxon>
        <taxon>Bacillati</taxon>
        <taxon>Bacillota</taxon>
        <taxon>Bacilli</taxon>
        <taxon>Bacillales</taxon>
        <taxon>Bacillaceae</taxon>
        <taxon>Bacillus</taxon>
        <taxon>Bacillus cereus group</taxon>
    </lineage>
</organism>
<evidence type="ECO:0000255" key="1">
    <source>
        <dbReference type="HAMAP-Rule" id="MF_01452"/>
    </source>
</evidence>
<accession>A9VJ01</accession>
<protein>
    <recommendedName>
        <fullName evidence="1">ATP-dependent helicase/deoxyribonuclease subunit B</fullName>
        <ecNumber evidence="1">3.1.-.-</ecNumber>
    </recommendedName>
    <alternativeName>
        <fullName evidence="1">ATP-dependent helicase/nuclease subunit AddB</fullName>
    </alternativeName>
</protein>
<proteinExistence type="inferred from homology"/>